<keyword id="KW-0028">Amino-acid biosynthesis</keyword>
<keyword id="KW-0963">Cytoplasm</keyword>
<keyword id="KW-0554">One-carbon metabolism</keyword>
<keyword id="KW-0663">Pyridoxal phosphate</keyword>
<keyword id="KW-0808">Transferase</keyword>
<organism>
    <name type="scientific">Wolbachia pipientis wMel</name>
    <dbReference type="NCBI Taxonomy" id="163164"/>
    <lineage>
        <taxon>Bacteria</taxon>
        <taxon>Pseudomonadati</taxon>
        <taxon>Pseudomonadota</taxon>
        <taxon>Alphaproteobacteria</taxon>
        <taxon>Rickettsiales</taxon>
        <taxon>Anaplasmataceae</taxon>
        <taxon>Wolbachieae</taxon>
        <taxon>Wolbachia</taxon>
    </lineage>
</organism>
<gene>
    <name evidence="1" type="primary">glyA</name>
    <name type="ordered locus">WD_1035</name>
</gene>
<reference key="1">
    <citation type="journal article" date="2004" name="PLoS Biol.">
        <title>Phylogenomics of the reproductive parasite Wolbachia pipientis wMel: a streamlined genome overrun by mobile genetic elements.</title>
        <authorList>
            <person name="Wu M."/>
            <person name="Sun L.V."/>
            <person name="Vamathevan J.J."/>
            <person name="Riegler M."/>
            <person name="DeBoy R.T."/>
            <person name="Brownlie J.C."/>
            <person name="McGraw E.A."/>
            <person name="Martin W."/>
            <person name="Esser C."/>
            <person name="Ahmadinejad N."/>
            <person name="Wiegand C."/>
            <person name="Madupu R."/>
            <person name="Beanan M.J."/>
            <person name="Brinkac L.M."/>
            <person name="Daugherty S.C."/>
            <person name="Durkin A.S."/>
            <person name="Kolonay J.F."/>
            <person name="Nelson W.C."/>
            <person name="Mohamoud Y."/>
            <person name="Lee P."/>
            <person name="Berry K.J."/>
            <person name="Young M.B."/>
            <person name="Utterback T.R."/>
            <person name="Weidman J.F."/>
            <person name="Nierman W.C."/>
            <person name="Paulsen I.T."/>
            <person name="Nelson K.E."/>
            <person name="Tettelin H."/>
            <person name="O'Neill S.L."/>
            <person name="Eisen J.A."/>
        </authorList>
    </citation>
    <scope>NUCLEOTIDE SEQUENCE [LARGE SCALE GENOMIC DNA]</scope>
</reference>
<comment type="function">
    <text evidence="1">Catalyzes the reversible interconversion of serine and glycine with tetrahydrofolate (THF) serving as the one-carbon carrier. This reaction serves as the major source of one-carbon groups required for the biosynthesis of purines, thymidylate, methionine, and other important biomolecules. Also exhibits THF-independent aldolase activity toward beta-hydroxyamino acids, producing glycine and aldehydes, via a retro-aldol mechanism.</text>
</comment>
<comment type="catalytic activity">
    <reaction evidence="1">
        <text>(6R)-5,10-methylene-5,6,7,8-tetrahydrofolate + glycine + H2O = (6S)-5,6,7,8-tetrahydrofolate + L-serine</text>
        <dbReference type="Rhea" id="RHEA:15481"/>
        <dbReference type="ChEBI" id="CHEBI:15377"/>
        <dbReference type="ChEBI" id="CHEBI:15636"/>
        <dbReference type="ChEBI" id="CHEBI:33384"/>
        <dbReference type="ChEBI" id="CHEBI:57305"/>
        <dbReference type="ChEBI" id="CHEBI:57453"/>
        <dbReference type="EC" id="2.1.2.1"/>
    </reaction>
</comment>
<comment type="cofactor">
    <cofactor evidence="1">
        <name>pyridoxal 5'-phosphate</name>
        <dbReference type="ChEBI" id="CHEBI:597326"/>
    </cofactor>
</comment>
<comment type="pathway">
    <text evidence="1">One-carbon metabolism; tetrahydrofolate interconversion.</text>
</comment>
<comment type="pathway">
    <text evidence="1">Amino-acid biosynthesis; glycine biosynthesis; glycine from L-serine: step 1/1.</text>
</comment>
<comment type="subunit">
    <text evidence="1">Homodimer.</text>
</comment>
<comment type="subcellular location">
    <subcellularLocation>
        <location evidence="1">Cytoplasm</location>
    </subcellularLocation>
</comment>
<comment type="similarity">
    <text evidence="1">Belongs to the SHMT family.</text>
</comment>
<feature type="chain" id="PRO_0000113699" description="Serine hydroxymethyltransferase">
    <location>
        <begin position="1"/>
        <end position="425"/>
    </location>
</feature>
<feature type="binding site" evidence="1">
    <location>
        <position position="128"/>
    </location>
    <ligand>
        <name>(6S)-5,6,7,8-tetrahydrofolate</name>
        <dbReference type="ChEBI" id="CHEBI:57453"/>
    </ligand>
</feature>
<feature type="binding site" evidence="1">
    <location>
        <begin position="132"/>
        <end position="134"/>
    </location>
    <ligand>
        <name>(6S)-5,6,7,8-tetrahydrofolate</name>
        <dbReference type="ChEBI" id="CHEBI:57453"/>
    </ligand>
</feature>
<feature type="site" description="Plays an important role in substrate specificity" evidence="1">
    <location>
        <position position="236"/>
    </location>
</feature>
<feature type="modified residue" description="N6-(pyridoxal phosphate)lysine" evidence="1">
    <location>
        <position position="237"/>
    </location>
</feature>
<name>GLYA_WOLPM</name>
<proteinExistence type="inferred from homology"/>
<evidence type="ECO:0000255" key="1">
    <source>
        <dbReference type="HAMAP-Rule" id="MF_00051"/>
    </source>
</evidence>
<protein>
    <recommendedName>
        <fullName evidence="1">Serine hydroxymethyltransferase</fullName>
        <shortName evidence="1">SHMT</shortName>
        <shortName evidence="1">Serine methylase</shortName>
        <ecNumber evidence="1">2.1.2.1</ecNumber>
    </recommendedName>
</protein>
<dbReference type="EC" id="2.1.2.1" evidence="1"/>
<dbReference type="EMBL" id="AE017196">
    <property type="protein sequence ID" value="AAS14693.1"/>
    <property type="molecule type" value="Genomic_DNA"/>
</dbReference>
<dbReference type="RefSeq" id="WP_010962995.1">
    <property type="nucleotide sequence ID" value="NZ_OX384529.1"/>
</dbReference>
<dbReference type="SMR" id="Q73GC3"/>
<dbReference type="EnsemblBacteria" id="AAS14693">
    <property type="protein sequence ID" value="AAS14693"/>
    <property type="gene ID" value="WD_1035"/>
</dbReference>
<dbReference type="GeneID" id="70036514"/>
<dbReference type="KEGG" id="wol:WD_1035"/>
<dbReference type="eggNOG" id="COG0112">
    <property type="taxonomic scope" value="Bacteria"/>
</dbReference>
<dbReference type="UniPathway" id="UPA00193"/>
<dbReference type="UniPathway" id="UPA00288">
    <property type="reaction ID" value="UER01023"/>
</dbReference>
<dbReference type="Proteomes" id="UP000008215">
    <property type="component" value="Chromosome"/>
</dbReference>
<dbReference type="GO" id="GO:0005829">
    <property type="term" value="C:cytosol"/>
    <property type="evidence" value="ECO:0007669"/>
    <property type="project" value="TreeGrafter"/>
</dbReference>
<dbReference type="GO" id="GO:0004372">
    <property type="term" value="F:glycine hydroxymethyltransferase activity"/>
    <property type="evidence" value="ECO:0007669"/>
    <property type="project" value="UniProtKB-UniRule"/>
</dbReference>
<dbReference type="GO" id="GO:0030170">
    <property type="term" value="F:pyridoxal phosphate binding"/>
    <property type="evidence" value="ECO:0007669"/>
    <property type="project" value="UniProtKB-UniRule"/>
</dbReference>
<dbReference type="GO" id="GO:0019264">
    <property type="term" value="P:glycine biosynthetic process from serine"/>
    <property type="evidence" value="ECO:0007669"/>
    <property type="project" value="UniProtKB-UniRule"/>
</dbReference>
<dbReference type="GO" id="GO:0035999">
    <property type="term" value="P:tetrahydrofolate interconversion"/>
    <property type="evidence" value="ECO:0007669"/>
    <property type="project" value="UniProtKB-UniRule"/>
</dbReference>
<dbReference type="CDD" id="cd00378">
    <property type="entry name" value="SHMT"/>
    <property type="match status" value="1"/>
</dbReference>
<dbReference type="FunFam" id="3.40.640.10:FF:000001">
    <property type="entry name" value="Serine hydroxymethyltransferase"/>
    <property type="match status" value="1"/>
</dbReference>
<dbReference type="Gene3D" id="3.90.1150.10">
    <property type="entry name" value="Aspartate Aminotransferase, domain 1"/>
    <property type="match status" value="1"/>
</dbReference>
<dbReference type="Gene3D" id="3.40.640.10">
    <property type="entry name" value="Type I PLP-dependent aspartate aminotransferase-like (Major domain)"/>
    <property type="match status" value="1"/>
</dbReference>
<dbReference type="HAMAP" id="MF_00051">
    <property type="entry name" value="SHMT"/>
    <property type="match status" value="1"/>
</dbReference>
<dbReference type="InterPro" id="IPR015424">
    <property type="entry name" value="PyrdxlP-dep_Trfase"/>
</dbReference>
<dbReference type="InterPro" id="IPR015421">
    <property type="entry name" value="PyrdxlP-dep_Trfase_major"/>
</dbReference>
<dbReference type="InterPro" id="IPR015422">
    <property type="entry name" value="PyrdxlP-dep_Trfase_small"/>
</dbReference>
<dbReference type="InterPro" id="IPR001085">
    <property type="entry name" value="Ser_HO-MeTrfase"/>
</dbReference>
<dbReference type="InterPro" id="IPR049943">
    <property type="entry name" value="Ser_HO-MeTrfase-like"/>
</dbReference>
<dbReference type="InterPro" id="IPR019798">
    <property type="entry name" value="Ser_HO-MeTrfase_PLP_BS"/>
</dbReference>
<dbReference type="InterPro" id="IPR039429">
    <property type="entry name" value="SHMT-like_dom"/>
</dbReference>
<dbReference type="NCBIfam" id="NF000586">
    <property type="entry name" value="PRK00011.1"/>
    <property type="match status" value="1"/>
</dbReference>
<dbReference type="PANTHER" id="PTHR11680">
    <property type="entry name" value="SERINE HYDROXYMETHYLTRANSFERASE"/>
    <property type="match status" value="1"/>
</dbReference>
<dbReference type="PANTHER" id="PTHR11680:SF35">
    <property type="entry name" value="SERINE HYDROXYMETHYLTRANSFERASE 1"/>
    <property type="match status" value="1"/>
</dbReference>
<dbReference type="Pfam" id="PF00464">
    <property type="entry name" value="SHMT"/>
    <property type="match status" value="1"/>
</dbReference>
<dbReference type="PIRSF" id="PIRSF000412">
    <property type="entry name" value="SHMT"/>
    <property type="match status" value="1"/>
</dbReference>
<dbReference type="SUPFAM" id="SSF53383">
    <property type="entry name" value="PLP-dependent transferases"/>
    <property type="match status" value="1"/>
</dbReference>
<dbReference type="PROSITE" id="PS00096">
    <property type="entry name" value="SHMT"/>
    <property type="match status" value="1"/>
</dbReference>
<sequence length="425" mass="46217">MMSVLKKICGSKNSLKSFDNEVYQSIEKELQRQKSQLQLIASENFASKAVMEAQGSFLTNKYAEGYPGKRYYCGCEHVDKIESLAIERLCKLFGVKFANVQPHSGSQANQAVFASLLTPGDTILGLSLSCGGHLTHGAAPSLSGKWFKSIQYTVNKDTYLLNMDEIEKLALEHKPKLIIAGASAYPRKMDFKRFREIADKVGAYLLADIAHYAGLIAAGEYPSPAEYAHVMTSTTHKTLRGPRGGIVMTNDEALHKKIQSAVFPGLQGGPLMHVIAAKAVAFKEALAPEFKTYSKKVVENAKVLAQELQKHGLDIITGGTDSHIVLVDLRSQKLTGKDVVDSLERAGITCNKNSVPFDTAKPTITSGLRFGTAAETTRGLEAENFKEIAGLINEVIQGLISGNSSSVEKAVKAKVERICSNFPIY</sequence>
<accession>Q73GC3</accession>